<dbReference type="EC" id="3.2.2.23" evidence="2"/>
<dbReference type="EC" id="4.2.99.18" evidence="2"/>
<dbReference type="EMBL" id="CU458896">
    <property type="protein sequence ID" value="CAM63331.1"/>
    <property type="molecule type" value="Genomic_DNA"/>
</dbReference>
<dbReference type="RefSeq" id="WP_005087736.1">
    <property type="nucleotide sequence ID" value="NZ_MLCG01000001.1"/>
</dbReference>
<dbReference type="SMR" id="B1MDL2"/>
<dbReference type="GeneID" id="93380187"/>
<dbReference type="KEGG" id="mab:MAB_3255c"/>
<dbReference type="Proteomes" id="UP000007137">
    <property type="component" value="Chromosome"/>
</dbReference>
<dbReference type="GO" id="GO:0034039">
    <property type="term" value="F:8-oxo-7,8-dihydroguanine DNA N-glycosylase activity"/>
    <property type="evidence" value="ECO:0007669"/>
    <property type="project" value="TreeGrafter"/>
</dbReference>
<dbReference type="GO" id="GO:0140078">
    <property type="term" value="F:class I DNA-(apurinic or apyrimidinic site) endonuclease activity"/>
    <property type="evidence" value="ECO:0007669"/>
    <property type="project" value="UniProtKB-EC"/>
</dbReference>
<dbReference type="GO" id="GO:0003684">
    <property type="term" value="F:damaged DNA binding"/>
    <property type="evidence" value="ECO:0007669"/>
    <property type="project" value="InterPro"/>
</dbReference>
<dbReference type="GO" id="GO:0008270">
    <property type="term" value="F:zinc ion binding"/>
    <property type="evidence" value="ECO:0007669"/>
    <property type="project" value="UniProtKB-UniRule"/>
</dbReference>
<dbReference type="GO" id="GO:0006284">
    <property type="term" value="P:base-excision repair"/>
    <property type="evidence" value="ECO:0007669"/>
    <property type="project" value="InterPro"/>
</dbReference>
<dbReference type="CDD" id="cd08966">
    <property type="entry name" value="EcFpg-like_N"/>
    <property type="match status" value="1"/>
</dbReference>
<dbReference type="FunFam" id="1.10.8.50:FF:000003">
    <property type="entry name" value="Formamidopyrimidine-DNA glycosylase"/>
    <property type="match status" value="1"/>
</dbReference>
<dbReference type="Gene3D" id="1.10.8.50">
    <property type="match status" value="1"/>
</dbReference>
<dbReference type="Gene3D" id="3.20.190.10">
    <property type="entry name" value="MutM-like, N-terminal"/>
    <property type="match status" value="1"/>
</dbReference>
<dbReference type="HAMAP" id="MF_00103">
    <property type="entry name" value="Fapy_DNA_glycosyl"/>
    <property type="match status" value="1"/>
</dbReference>
<dbReference type="InterPro" id="IPR015886">
    <property type="entry name" value="DNA_glyclase/AP_lyase_DNA-bd"/>
</dbReference>
<dbReference type="InterPro" id="IPR015887">
    <property type="entry name" value="DNA_glyclase_Znf_dom_DNA_BS"/>
</dbReference>
<dbReference type="InterPro" id="IPR020629">
    <property type="entry name" value="Formamido-pyr_DNA_Glyclase"/>
</dbReference>
<dbReference type="InterPro" id="IPR012319">
    <property type="entry name" value="FPG_cat"/>
</dbReference>
<dbReference type="InterPro" id="IPR035937">
    <property type="entry name" value="MutM-like_N-ter"/>
</dbReference>
<dbReference type="InterPro" id="IPR010979">
    <property type="entry name" value="Ribosomal_uS13-like_H2TH"/>
</dbReference>
<dbReference type="InterPro" id="IPR000214">
    <property type="entry name" value="Znf_DNA_glyclase/AP_lyase"/>
</dbReference>
<dbReference type="InterPro" id="IPR010663">
    <property type="entry name" value="Znf_FPG/IleRS"/>
</dbReference>
<dbReference type="NCBIfam" id="TIGR00577">
    <property type="entry name" value="fpg"/>
    <property type="match status" value="1"/>
</dbReference>
<dbReference type="NCBIfam" id="NF002211">
    <property type="entry name" value="PRK01103.1"/>
    <property type="match status" value="1"/>
</dbReference>
<dbReference type="PANTHER" id="PTHR22993">
    <property type="entry name" value="FORMAMIDOPYRIMIDINE-DNA GLYCOSYLASE"/>
    <property type="match status" value="1"/>
</dbReference>
<dbReference type="PANTHER" id="PTHR22993:SF9">
    <property type="entry name" value="FORMAMIDOPYRIMIDINE-DNA GLYCOSYLASE"/>
    <property type="match status" value="1"/>
</dbReference>
<dbReference type="Pfam" id="PF01149">
    <property type="entry name" value="Fapy_DNA_glyco"/>
    <property type="match status" value="1"/>
</dbReference>
<dbReference type="Pfam" id="PF06831">
    <property type="entry name" value="H2TH"/>
    <property type="match status" value="1"/>
</dbReference>
<dbReference type="Pfam" id="PF06827">
    <property type="entry name" value="zf-FPG_IleRS"/>
    <property type="match status" value="1"/>
</dbReference>
<dbReference type="SMART" id="SM00898">
    <property type="entry name" value="Fapy_DNA_glyco"/>
    <property type="match status" value="1"/>
</dbReference>
<dbReference type="SMART" id="SM01232">
    <property type="entry name" value="H2TH"/>
    <property type="match status" value="1"/>
</dbReference>
<dbReference type="SUPFAM" id="SSF57716">
    <property type="entry name" value="Glucocorticoid receptor-like (DNA-binding domain)"/>
    <property type="match status" value="1"/>
</dbReference>
<dbReference type="SUPFAM" id="SSF81624">
    <property type="entry name" value="N-terminal domain of MutM-like DNA repair proteins"/>
    <property type="match status" value="1"/>
</dbReference>
<dbReference type="SUPFAM" id="SSF46946">
    <property type="entry name" value="S13-like H2TH domain"/>
    <property type="match status" value="1"/>
</dbReference>
<dbReference type="PROSITE" id="PS51068">
    <property type="entry name" value="FPG_CAT"/>
    <property type="match status" value="1"/>
</dbReference>
<dbReference type="PROSITE" id="PS01242">
    <property type="entry name" value="ZF_FPG_1"/>
    <property type="match status" value="1"/>
</dbReference>
<dbReference type="PROSITE" id="PS51066">
    <property type="entry name" value="ZF_FPG_2"/>
    <property type="match status" value="1"/>
</dbReference>
<reference key="1">
    <citation type="journal article" date="2009" name="PLoS ONE">
        <title>Non mycobacterial virulence genes in the genome of the emerging pathogen Mycobacterium abscessus.</title>
        <authorList>
            <person name="Ripoll F."/>
            <person name="Pasek S."/>
            <person name="Schenowitz C."/>
            <person name="Dossat C."/>
            <person name="Barbe V."/>
            <person name="Rottman M."/>
            <person name="Macheras E."/>
            <person name="Heym B."/>
            <person name="Herrmann J.L."/>
            <person name="Daffe M."/>
            <person name="Brosch R."/>
            <person name="Risler J.L."/>
            <person name="Gaillard J.L."/>
        </authorList>
    </citation>
    <scope>NUCLEOTIDE SEQUENCE [LARGE SCALE GENOMIC DNA]</scope>
    <source>
        <strain>ATCC 19977 / DSM 44196 / CCUG 20993 / CIP 104536 / JCM 13569 / NCTC 13031 / TMC 1543 / L948</strain>
    </source>
</reference>
<evidence type="ECO:0000250" key="1"/>
<evidence type="ECO:0000255" key="2">
    <source>
        <dbReference type="HAMAP-Rule" id="MF_00103"/>
    </source>
</evidence>
<proteinExistence type="inferred from homology"/>
<sequence>MPELPEVEVVRRGLHHHLVGKTIASTLVYHERAVRRQSGGAVELAGLLAGQQISGTGRRGKYLWLTLEGSSGAQALVVHLGMSGQMLIGPISRPQHLRIAATLDDGSVLSFVDQRTFGGWMVTDLVTVDGSELPEPVAHIARDPLDELFEIGAVVTRLRGKHTEIKRALLDQTVVSGVGNIYADEALWQARVHGRRLTDGMSRAKLTEVLDSAAAVMRLALAQGGTSFDDLYVNVNGESGYFDRSLEAYGREGEPCRRCGRAMRREAFMNRSSYFCPSCQRLVEPR</sequence>
<gene>
    <name evidence="2" type="primary">mutM</name>
    <name evidence="2" type="synonym">fpg</name>
    <name type="ordered locus">MAB_3255c</name>
</gene>
<comment type="function">
    <text evidence="2">Involved in base excision repair of DNA damaged by oxidation or by mutagenic agents. Acts as a DNA glycosylase that recognizes and removes damaged bases. Has a preference for oxidized purines, such as 7,8-dihydro-8-oxoguanine (8-oxoG). Has AP (apurinic/apyrimidinic) lyase activity and introduces nicks in the DNA strand. Cleaves the DNA backbone by beta-delta elimination to generate a single-strand break at the site of the removed base with both 3'- and 5'-phosphates.</text>
</comment>
<comment type="catalytic activity">
    <reaction evidence="2">
        <text>Hydrolysis of DNA containing ring-opened 7-methylguanine residues, releasing 2,6-diamino-4-hydroxy-5-(N-methyl)formamidopyrimidine.</text>
        <dbReference type="EC" id="3.2.2.23"/>
    </reaction>
</comment>
<comment type="catalytic activity">
    <reaction evidence="2">
        <text>2'-deoxyribonucleotide-(2'-deoxyribose 5'-phosphate)-2'-deoxyribonucleotide-DNA = a 3'-end 2'-deoxyribonucleotide-(2,3-dehydro-2,3-deoxyribose 5'-phosphate)-DNA + a 5'-end 5'-phospho-2'-deoxyribonucleoside-DNA + H(+)</text>
        <dbReference type="Rhea" id="RHEA:66592"/>
        <dbReference type="Rhea" id="RHEA-COMP:13180"/>
        <dbReference type="Rhea" id="RHEA-COMP:16897"/>
        <dbReference type="Rhea" id="RHEA-COMP:17067"/>
        <dbReference type="ChEBI" id="CHEBI:15378"/>
        <dbReference type="ChEBI" id="CHEBI:136412"/>
        <dbReference type="ChEBI" id="CHEBI:157695"/>
        <dbReference type="ChEBI" id="CHEBI:167181"/>
        <dbReference type="EC" id="4.2.99.18"/>
    </reaction>
</comment>
<comment type="cofactor">
    <cofactor evidence="2">
        <name>Zn(2+)</name>
        <dbReference type="ChEBI" id="CHEBI:29105"/>
    </cofactor>
    <text evidence="2">Binds 1 zinc ion per subunit.</text>
</comment>
<comment type="subunit">
    <text evidence="2">Monomer.</text>
</comment>
<comment type="similarity">
    <text evidence="2">Belongs to the FPG family.</text>
</comment>
<accession>B1MDL2</accession>
<organism>
    <name type="scientific">Mycobacteroides abscessus (strain ATCC 19977 / DSM 44196 / CCUG 20993 / CIP 104536 / JCM 13569 / NCTC 13031 / TMC 1543 / L948)</name>
    <name type="common">Mycobacterium abscessus</name>
    <dbReference type="NCBI Taxonomy" id="561007"/>
    <lineage>
        <taxon>Bacteria</taxon>
        <taxon>Bacillati</taxon>
        <taxon>Actinomycetota</taxon>
        <taxon>Actinomycetes</taxon>
        <taxon>Mycobacteriales</taxon>
        <taxon>Mycobacteriaceae</taxon>
        <taxon>Mycobacteroides</taxon>
        <taxon>Mycobacteroides abscessus</taxon>
    </lineage>
</organism>
<name>FPG_MYCA9</name>
<keyword id="KW-0227">DNA damage</keyword>
<keyword id="KW-0234">DNA repair</keyword>
<keyword id="KW-0238">DNA-binding</keyword>
<keyword id="KW-0326">Glycosidase</keyword>
<keyword id="KW-0378">Hydrolase</keyword>
<keyword id="KW-0456">Lyase</keyword>
<keyword id="KW-0479">Metal-binding</keyword>
<keyword id="KW-0511">Multifunctional enzyme</keyword>
<keyword id="KW-1185">Reference proteome</keyword>
<keyword id="KW-0862">Zinc</keyword>
<keyword id="KW-0863">Zinc-finger</keyword>
<protein>
    <recommendedName>
        <fullName evidence="2">Formamidopyrimidine-DNA glycosylase</fullName>
        <shortName evidence="2">Fapy-DNA glycosylase</shortName>
        <ecNumber evidence="2">3.2.2.23</ecNumber>
    </recommendedName>
    <alternativeName>
        <fullName evidence="2">DNA-(apurinic or apyrimidinic site) lyase MutM</fullName>
        <shortName evidence="2">AP lyase MutM</shortName>
        <ecNumber evidence="2">4.2.99.18</ecNumber>
    </alternativeName>
</protein>
<feature type="initiator methionine" description="Removed" evidence="1">
    <location>
        <position position="1"/>
    </location>
</feature>
<feature type="chain" id="PRO_1000094056" description="Formamidopyrimidine-DNA glycosylase">
    <location>
        <begin position="2"/>
        <end position="286"/>
    </location>
</feature>
<feature type="zinc finger region" description="FPG-type" evidence="2">
    <location>
        <begin position="247"/>
        <end position="281"/>
    </location>
</feature>
<feature type="active site" description="Schiff-base intermediate with DNA" evidence="2">
    <location>
        <position position="2"/>
    </location>
</feature>
<feature type="active site" description="Proton donor" evidence="2">
    <location>
        <position position="3"/>
    </location>
</feature>
<feature type="active site" description="Proton donor; for beta-elimination activity" evidence="2">
    <location>
        <position position="61"/>
    </location>
</feature>
<feature type="active site" description="Proton donor; for delta-elimination activity" evidence="2">
    <location>
        <position position="271"/>
    </location>
</feature>
<feature type="binding site" evidence="2">
    <location>
        <position position="96"/>
    </location>
    <ligand>
        <name>DNA</name>
        <dbReference type="ChEBI" id="CHEBI:16991"/>
    </ligand>
</feature>
<feature type="binding site" evidence="2">
    <location>
        <position position="115"/>
    </location>
    <ligand>
        <name>DNA</name>
        <dbReference type="ChEBI" id="CHEBI:16991"/>
    </ligand>
</feature>
<feature type="binding site" evidence="2">
    <location>
        <position position="161"/>
    </location>
    <ligand>
        <name>DNA</name>
        <dbReference type="ChEBI" id="CHEBI:16991"/>
    </ligand>
</feature>